<name>SYA_DEIGD</name>
<proteinExistence type="inferred from homology"/>
<keyword id="KW-0030">Aminoacyl-tRNA synthetase</keyword>
<keyword id="KW-0067">ATP-binding</keyword>
<keyword id="KW-0963">Cytoplasm</keyword>
<keyword id="KW-0436">Ligase</keyword>
<keyword id="KW-0479">Metal-binding</keyword>
<keyword id="KW-0547">Nucleotide-binding</keyword>
<keyword id="KW-0648">Protein biosynthesis</keyword>
<keyword id="KW-0694">RNA-binding</keyword>
<keyword id="KW-0820">tRNA-binding</keyword>
<keyword id="KW-0862">Zinc</keyword>
<protein>
    <recommendedName>
        <fullName evidence="1">Alanine--tRNA ligase</fullName>
        <ecNumber evidence="1">6.1.1.7</ecNumber>
    </recommendedName>
    <alternativeName>
        <fullName evidence="1">Alanyl-tRNA synthetase</fullName>
        <shortName evidence="1">AlaRS</shortName>
    </alternativeName>
</protein>
<organism>
    <name type="scientific">Deinococcus geothermalis (strain DSM 11300 / CIP 105573 / AG-3a)</name>
    <dbReference type="NCBI Taxonomy" id="319795"/>
    <lineage>
        <taxon>Bacteria</taxon>
        <taxon>Thermotogati</taxon>
        <taxon>Deinococcota</taxon>
        <taxon>Deinococci</taxon>
        <taxon>Deinococcales</taxon>
        <taxon>Deinococcaceae</taxon>
        <taxon>Deinococcus</taxon>
    </lineage>
</organism>
<sequence>MTGPLTTAEIREKFLSFFESKGHLRLPSHSLIAPDPTTLFTVAGMQPFKPQFMGAPAKFPGYGENRRVTTAQKCIRVGDIENVGRTRRHLSLFEMMGNFSFGDYFKREAILWAWEFLTSPEWLGMDPARMYVTIYEDDNEAFGYWTQDVGLPEDHIHRFGADENFWPADAPAKGPNGPCGPCSEIYYDRGPHYGDDTWADYAQTRESARFLEVWNLVFPQYDRQDGGVLADLPFKNIDTGMGLERVASVVQDVPDFYSNDVFRPLVEKVAELSGKPYEGEVSVSHRVVAEHIRSVAMTIADGVALSNTGRGYVIRKILRRASRHAYLLGLHEPTLYRLVPLVVQAMGGAYPELVTEEARVTAAIRAEEERFLKTLESGMQRLSGLLEGMERGAVLPGEEAFLLYDTYGFPLDLTKEIAEEYGISVNEAEYAESLERAQETARAASKYGKSELFGGSQEALEGLPPTQFVGYDELEAQGEVLALVGAGERLDHLMAGSEATVVLSRTPFYAEGGGEVGDTGVLEWEGGRGLVRDTRKTPAGIWLHDVLVEEGELTPGVTVRGVVSSERQAIQRHHTATHLLHAALRAVLGPGVRQAGSLVAPERLRFDFTHGAALTADELGQVERLVSRWVTANFPVTWREMPLAEAKAAGATALFGEKYGDTVRVVRVEGGIPFGDATVTSMELCGGAHVTRTGDIGAFVIVSDENVAAGVRRIEALAGEAATAWVRAQLNNVHRVSGLLNTSPDTLETRVIGLQSQLRAAQQETAQARRQLAEAQMGGASTQQVRELGGFKVAVLRLSGIEGGELRGAADKLLDQSGADLAVIASDKGLVVKASKTAVARGAHAGQLIGKLAAAGGGKGGGRPDMAQAGIGNPEAALAALDTAF</sequence>
<reference key="1">
    <citation type="submission" date="2006-04" db="EMBL/GenBank/DDBJ databases">
        <title>Complete sequence of chromosome of Deinococcus geothermalis DSM 11300.</title>
        <authorList>
            <person name="Copeland A."/>
            <person name="Lucas S."/>
            <person name="Lapidus A."/>
            <person name="Barry K."/>
            <person name="Detter J.C."/>
            <person name="Glavina del Rio T."/>
            <person name="Hammon N."/>
            <person name="Israni S."/>
            <person name="Dalin E."/>
            <person name="Tice H."/>
            <person name="Pitluck S."/>
            <person name="Brettin T."/>
            <person name="Bruce D."/>
            <person name="Han C."/>
            <person name="Tapia R."/>
            <person name="Saunders E."/>
            <person name="Gilna P."/>
            <person name="Schmutz J."/>
            <person name="Larimer F."/>
            <person name="Land M."/>
            <person name="Hauser L."/>
            <person name="Kyrpides N."/>
            <person name="Kim E."/>
            <person name="Daly M.J."/>
            <person name="Fredrickson J.K."/>
            <person name="Makarova K.S."/>
            <person name="Gaidamakova E.K."/>
            <person name="Zhai M."/>
            <person name="Richardson P."/>
        </authorList>
    </citation>
    <scope>NUCLEOTIDE SEQUENCE [LARGE SCALE GENOMIC DNA]</scope>
    <source>
        <strain>DSM 11300 / CIP 105573 / AG-3a</strain>
    </source>
</reference>
<dbReference type="EC" id="6.1.1.7" evidence="1"/>
<dbReference type="EMBL" id="CP000359">
    <property type="protein sequence ID" value="ABF46495.1"/>
    <property type="molecule type" value="Genomic_DNA"/>
</dbReference>
<dbReference type="RefSeq" id="WP_011531318.1">
    <property type="nucleotide sequence ID" value="NC_008025.1"/>
</dbReference>
<dbReference type="SMR" id="Q1IW89"/>
<dbReference type="STRING" id="319795.Dgeo_2201"/>
<dbReference type="KEGG" id="dge:Dgeo_2201"/>
<dbReference type="eggNOG" id="COG0013">
    <property type="taxonomic scope" value="Bacteria"/>
</dbReference>
<dbReference type="HOGENOM" id="CLU_004485_1_1_0"/>
<dbReference type="Proteomes" id="UP000002431">
    <property type="component" value="Chromosome"/>
</dbReference>
<dbReference type="GO" id="GO:0005829">
    <property type="term" value="C:cytosol"/>
    <property type="evidence" value="ECO:0007669"/>
    <property type="project" value="TreeGrafter"/>
</dbReference>
<dbReference type="GO" id="GO:0004813">
    <property type="term" value="F:alanine-tRNA ligase activity"/>
    <property type="evidence" value="ECO:0007669"/>
    <property type="project" value="UniProtKB-UniRule"/>
</dbReference>
<dbReference type="GO" id="GO:0002161">
    <property type="term" value="F:aminoacyl-tRNA deacylase activity"/>
    <property type="evidence" value="ECO:0007669"/>
    <property type="project" value="TreeGrafter"/>
</dbReference>
<dbReference type="GO" id="GO:0005524">
    <property type="term" value="F:ATP binding"/>
    <property type="evidence" value="ECO:0007669"/>
    <property type="project" value="UniProtKB-UniRule"/>
</dbReference>
<dbReference type="GO" id="GO:0000049">
    <property type="term" value="F:tRNA binding"/>
    <property type="evidence" value="ECO:0007669"/>
    <property type="project" value="UniProtKB-KW"/>
</dbReference>
<dbReference type="GO" id="GO:0008270">
    <property type="term" value="F:zinc ion binding"/>
    <property type="evidence" value="ECO:0007669"/>
    <property type="project" value="UniProtKB-UniRule"/>
</dbReference>
<dbReference type="GO" id="GO:0006419">
    <property type="term" value="P:alanyl-tRNA aminoacylation"/>
    <property type="evidence" value="ECO:0007669"/>
    <property type="project" value="UniProtKB-UniRule"/>
</dbReference>
<dbReference type="CDD" id="cd00673">
    <property type="entry name" value="AlaRS_core"/>
    <property type="match status" value="1"/>
</dbReference>
<dbReference type="FunFam" id="2.40.30.130:FF:000001">
    <property type="entry name" value="Alanine--tRNA ligase"/>
    <property type="match status" value="1"/>
</dbReference>
<dbReference type="FunFam" id="3.10.310.40:FF:000001">
    <property type="entry name" value="Alanine--tRNA ligase"/>
    <property type="match status" value="1"/>
</dbReference>
<dbReference type="FunFam" id="3.30.54.20:FF:000001">
    <property type="entry name" value="Alanine--tRNA ligase"/>
    <property type="match status" value="1"/>
</dbReference>
<dbReference type="FunFam" id="3.30.930.10:FF:000046">
    <property type="entry name" value="Alanine--tRNA ligase"/>
    <property type="match status" value="1"/>
</dbReference>
<dbReference type="FunFam" id="3.30.980.10:FF:000004">
    <property type="entry name" value="Alanine--tRNA ligase, cytoplasmic"/>
    <property type="match status" value="1"/>
</dbReference>
<dbReference type="Gene3D" id="2.40.30.130">
    <property type="match status" value="1"/>
</dbReference>
<dbReference type="Gene3D" id="3.10.310.40">
    <property type="match status" value="1"/>
</dbReference>
<dbReference type="Gene3D" id="3.30.54.20">
    <property type="match status" value="1"/>
</dbReference>
<dbReference type="Gene3D" id="6.10.250.550">
    <property type="match status" value="1"/>
</dbReference>
<dbReference type="Gene3D" id="3.30.930.10">
    <property type="entry name" value="Bira Bifunctional Protein, Domain 2"/>
    <property type="match status" value="1"/>
</dbReference>
<dbReference type="Gene3D" id="3.30.980.10">
    <property type="entry name" value="Threonyl-trna Synthetase, Chain A, domain 2"/>
    <property type="match status" value="1"/>
</dbReference>
<dbReference type="HAMAP" id="MF_00036_B">
    <property type="entry name" value="Ala_tRNA_synth_B"/>
    <property type="match status" value="1"/>
</dbReference>
<dbReference type="InterPro" id="IPR045864">
    <property type="entry name" value="aa-tRNA-synth_II/BPL/LPL"/>
</dbReference>
<dbReference type="InterPro" id="IPR002318">
    <property type="entry name" value="Ala-tRNA-lgiase_IIc"/>
</dbReference>
<dbReference type="InterPro" id="IPR018162">
    <property type="entry name" value="Ala-tRNA-ligase_IIc_anticod-bd"/>
</dbReference>
<dbReference type="InterPro" id="IPR018165">
    <property type="entry name" value="Ala-tRNA-synth_IIc_core"/>
</dbReference>
<dbReference type="InterPro" id="IPR018164">
    <property type="entry name" value="Ala-tRNA-synth_IIc_N"/>
</dbReference>
<dbReference type="InterPro" id="IPR050058">
    <property type="entry name" value="Ala-tRNA_ligase"/>
</dbReference>
<dbReference type="InterPro" id="IPR023033">
    <property type="entry name" value="Ala_tRNA_ligase_euk/bac"/>
</dbReference>
<dbReference type="InterPro" id="IPR003156">
    <property type="entry name" value="DHHA1_dom"/>
</dbReference>
<dbReference type="InterPro" id="IPR018163">
    <property type="entry name" value="Thr/Ala-tRNA-synth_IIc_edit"/>
</dbReference>
<dbReference type="InterPro" id="IPR009000">
    <property type="entry name" value="Transl_B-barrel_sf"/>
</dbReference>
<dbReference type="InterPro" id="IPR012947">
    <property type="entry name" value="tRNA_SAD"/>
</dbReference>
<dbReference type="NCBIfam" id="TIGR00344">
    <property type="entry name" value="alaS"/>
    <property type="match status" value="1"/>
</dbReference>
<dbReference type="PANTHER" id="PTHR11777:SF9">
    <property type="entry name" value="ALANINE--TRNA LIGASE, CYTOPLASMIC"/>
    <property type="match status" value="1"/>
</dbReference>
<dbReference type="PANTHER" id="PTHR11777">
    <property type="entry name" value="ALANYL-TRNA SYNTHETASE"/>
    <property type="match status" value="1"/>
</dbReference>
<dbReference type="Pfam" id="PF02272">
    <property type="entry name" value="DHHA1"/>
    <property type="match status" value="1"/>
</dbReference>
<dbReference type="Pfam" id="PF01411">
    <property type="entry name" value="tRNA-synt_2c"/>
    <property type="match status" value="1"/>
</dbReference>
<dbReference type="Pfam" id="PF07973">
    <property type="entry name" value="tRNA_SAD"/>
    <property type="match status" value="1"/>
</dbReference>
<dbReference type="PRINTS" id="PR00980">
    <property type="entry name" value="TRNASYNTHALA"/>
</dbReference>
<dbReference type="SMART" id="SM00863">
    <property type="entry name" value="tRNA_SAD"/>
    <property type="match status" value="1"/>
</dbReference>
<dbReference type="SUPFAM" id="SSF55681">
    <property type="entry name" value="Class II aaRS and biotin synthetases"/>
    <property type="match status" value="1"/>
</dbReference>
<dbReference type="SUPFAM" id="SSF101353">
    <property type="entry name" value="Putative anticodon-binding domain of alanyl-tRNA synthetase (AlaRS)"/>
    <property type="match status" value="1"/>
</dbReference>
<dbReference type="SUPFAM" id="SSF55186">
    <property type="entry name" value="ThrRS/AlaRS common domain"/>
    <property type="match status" value="1"/>
</dbReference>
<dbReference type="SUPFAM" id="SSF50447">
    <property type="entry name" value="Translation proteins"/>
    <property type="match status" value="1"/>
</dbReference>
<dbReference type="PROSITE" id="PS50860">
    <property type="entry name" value="AA_TRNA_LIGASE_II_ALA"/>
    <property type="match status" value="1"/>
</dbReference>
<gene>
    <name evidence="1" type="primary">alaS</name>
    <name type="ordered locus">Dgeo_2201</name>
</gene>
<comment type="function">
    <text evidence="1">Catalyzes the attachment of alanine to tRNA(Ala) in a two-step reaction: alanine is first activated by ATP to form Ala-AMP and then transferred to the acceptor end of tRNA(Ala). Also edits incorrectly charged Ser-tRNA(Ala) and Gly-tRNA(Ala) via its editing domain.</text>
</comment>
<comment type="catalytic activity">
    <reaction evidence="1">
        <text>tRNA(Ala) + L-alanine + ATP = L-alanyl-tRNA(Ala) + AMP + diphosphate</text>
        <dbReference type="Rhea" id="RHEA:12540"/>
        <dbReference type="Rhea" id="RHEA-COMP:9657"/>
        <dbReference type="Rhea" id="RHEA-COMP:9923"/>
        <dbReference type="ChEBI" id="CHEBI:30616"/>
        <dbReference type="ChEBI" id="CHEBI:33019"/>
        <dbReference type="ChEBI" id="CHEBI:57972"/>
        <dbReference type="ChEBI" id="CHEBI:78442"/>
        <dbReference type="ChEBI" id="CHEBI:78497"/>
        <dbReference type="ChEBI" id="CHEBI:456215"/>
        <dbReference type="EC" id="6.1.1.7"/>
    </reaction>
</comment>
<comment type="cofactor">
    <cofactor evidence="1">
        <name>Zn(2+)</name>
        <dbReference type="ChEBI" id="CHEBI:29105"/>
    </cofactor>
    <text evidence="1">Binds 1 zinc ion per subunit.</text>
</comment>
<comment type="subcellular location">
    <subcellularLocation>
        <location evidence="1">Cytoplasm</location>
    </subcellularLocation>
</comment>
<comment type="domain">
    <text evidence="1">Consists of three domains; the N-terminal catalytic domain, the editing domain and the C-terminal C-Ala domain. The editing domain removes incorrectly charged amino acids, while the C-Ala domain, along with tRNA(Ala), serves as a bridge to cooperatively bring together the editing and aminoacylation centers thus stimulating deacylation of misacylated tRNAs.</text>
</comment>
<comment type="similarity">
    <text evidence="1">Belongs to the class-II aminoacyl-tRNA synthetase family.</text>
</comment>
<accession>Q1IW89</accession>
<evidence type="ECO:0000255" key="1">
    <source>
        <dbReference type="HAMAP-Rule" id="MF_00036"/>
    </source>
</evidence>
<feature type="chain" id="PRO_0000347581" description="Alanine--tRNA ligase">
    <location>
        <begin position="1"/>
        <end position="885"/>
    </location>
</feature>
<feature type="binding site" evidence="1">
    <location>
        <position position="574"/>
    </location>
    <ligand>
        <name>Zn(2+)</name>
        <dbReference type="ChEBI" id="CHEBI:29105"/>
    </ligand>
</feature>
<feature type="binding site" evidence="1">
    <location>
        <position position="578"/>
    </location>
    <ligand>
        <name>Zn(2+)</name>
        <dbReference type="ChEBI" id="CHEBI:29105"/>
    </ligand>
</feature>
<feature type="binding site" evidence="1">
    <location>
        <position position="685"/>
    </location>
    <ligand>
        <name>Zn(2+)</name>
        <dbReference type="ChEBI" id="CHEBI:29105"/>
    </ligand>
</feature>
<feature type="binding site" evidence="1">
    <location>
        <position position="689"/>
    </location>
    <ligand>
        <name>Zn(2+)</name>
        <dbReference type="ChEBI" id="CHEBI:29105"/>
    </ligand>
</feature>